<name>HFQ_HAEIE</name>
<comment type="function">
    <text evidence="1">RNA chaperone that binds small regulatory RNA (sRNAs) and mRNAs to facilitate mRNA translational regulation in response to envelope stress, environmental stress and changes in metabolite concentrations. Also binds with high specificity to tRNAs.</text>
</comment>
<comment type="subunit">
    <text evidence="1">Homohexamer.</text>
</comment>
<comment type="similarity">
    <text evidence="1">Belongs to the Hfq family.</text>
</comment>
<reference key="1">
    <citation type="journal article" date="2007" name="Genome Biol.">
        <title>Characterization and modeling of the Haemophilus influenzae core and supragenomes based on the complete genomic sequences of Rd and 12 clinical nontypeable strains.</title>
        <authorList>
            <person name="Hogg J.S."/>
            <person name="Hu F.Z."/>
            <person name="Janto B."/>
            <person name="Boissy R."/>
            <person name="Hayes J."/>
            <person name="Keefe R."/>
            <person name="Post J.C."/>
            <person name="Ehrlich G.D."/>
        </authorList>
    </citation>
    <scope>NUCLEOTIDE SEQUENCE [LARGE SCALE GENOMIC DNA]</scope>
    <source>
        <strain>PittEE</strain>
    </source>
</reference>
<sequence length="91" mass="10280">MAKGQSLQDPYLNALRRERIPVSIYLVNGIKLQGQIESFDQFVILLKNTVNQMVYKHAISTVVPARSVSHHNNNHHTTPTEAVENVETQAE</sequence>
<keyword id="KW-0694">RNA-binding</keyword>
<keyword id="KW-0346">Stress response</keyword>
<proteinExistence type="inferred from homology"/>
<dbReference type="EMBL" id="CP000671">
    <property type="protein sequence ID" value="ABQ97678.1"/>
    <property type="molecule type" value="Genomic_DNA"/>
</dbReference>
<dbReference type="SMR" id="A5UA77"/>
<dbReference type="KEGG" id="hip:CGSHiEE_00940"/>
<dbReference type="HOGENOM" id="CLU_113688_2_2_6"/>
<dbReference type="GO" id="GO:0005829">
    <property type="term" value="C:cytosol"/>
    <property type="evidence" value="ECO:0007669"/>
    <property type="project" value="TreeGrafter"/>
</dbReference>
<dbReference type="GO" id="GO:0003723">
    <property type="term" value="F:RNA binding"/>
    <property type="evidence" value="ECO:0007669"/>
    <property type="project" value="UniProtKB-UniRule"/>
</dbReference>
<dbReference type="GO" id="GO:0006355">
    <property type="term" value="P:regulation of DNA-templated transcription"/>
    <property type="evidence" value="ECO:0007669"/>
    <property type="project" value="InterPro"/>
</dbReference>
<dbReference type="GO" id="GO:0043487">
    <property type="term" value="P:regulation of RNA stability"/>
    <property type="evidence" value="ECO:0007669"/>
    <property type="project" value="TreeGrafter"/>
</dbReference>
<dbReference type="GO" id="GO:0045974">
    <property type="term" value="P:regulation of translation, ncRNA-mediated"/>
    <property type="evidence" value="ECO:0007669"/>
    <property type="project" value="TreeGrafter"/>
</dbReference>
<dbReference type="CDD" id="cd01716">
    <property type="entry name" value="Hfq"/>
    <property type="match status" value="1"/>
</dbReference>
<dbReference type="FunFam" id="2.30.30.100:FF:000001">
    <property type="entry name" value="RNA-binding protein Hfq"/>
    <property type="match status" value="1"/>
</dbReference>
<dbReference type="Gene3D" id="2.30.30.100">
    <property type="match status" value="1"/>
</dbReference>
<dbReference type="HAMAP" id="MF_00436">
    <property type="entry name" value="Hfq"/>
    <property type="match status" value="1"/>
</dbReference>
<dbReference type="InterPro" id="IPR005001">
    <property type="entry name" value="Hfq"/>
</dbReference>
<dbReference type="InterPro" id="IPR010920">
    <property type="entry name" value="LSM_dom_sf"/>
</dbReference>
<dbReference type="InterPro" id="IPR047575">
    <property type="entry name" value="Sm"/>
</dbReference>
<dbReference type="NCBIfam" id="TIGR02383">
    <property type="entry name" value="Hfq"/>
    <property type="match status" value="1"/>
</dbReference>
<dbReference type="NCBIfam" id="NF001602">
    <property type="entry name" value="PRK00395.1"/>
    <property type="match status" value="1"/>
</dbReference>
<dbReference type="PANTHER" id="PTHR34772">
    <property type="entry name" value="RNA-BINDING PROTEIN HFQ"/>
    <property type="match status" value="1"/>
</dbReference>
<dbReference type="PANTHER" id="PTHR34772:SF1">
    <property type="entry name" value="RNA-BINDING PROTEIN HFQ"/>
    <property type="match status" value="1"/>
</dbReference>
<dbReference type="Pfam" id="PF17209">
    <property type="entry name" value="Hfq"/>
    <property type="match status" value="1"/>
</dbReference>
<dbReference type="SUPFAM" id="SSF50182">
    <property type="entry name" value="Sm-like ribonucleoproteins"/>
    <property type="match status" value="1"/>
</dbReference>
<dbReference type="PROSITE" id="PS52002">
    <property type="entry name" value="SM"/>
    <property type="match status" value="1"/>
</dbReference>
<gene>
    <name evidence="1" type="primary">hfq</name>
    <name type="ordered locus">CGSHiEE_00940</name>
</gene>
<feature type="chain" id="PRO_1000025911" description="RNA-binding protein Hfq">
    <location>
        <begin position="1"/>
        <end position="91"/>
    </location>
</feature>
<feature type="domain" description="Sm" evidence="2">
    <location>
        <begin position="9"/>
        <end position="68"/>
    </location>
</feature>
<feature type="region of interest" description="Disordered" evidence="3">
    <location>
        <begin position="68"/>
        <end position="91"/>
    </location>
</feature>
<evidence type="ECO:0000255" key="1">
    <source>
        <dbReference type="HAMAP-Rule" id="MF_00436"/>
    </source>
</evidence>
<evidence type="ECO:0000255" key="2">
    <source>
        <dbReference type="PROSITE-ProRule" id="PRU01346"/>
    </source>
</evidence>
<evidence type="ECO:0000256" key="3">
    <source>
        <dbReference type="SAM" id="MobiDB-lite"/>
    </source>
</evidence>
<accession>A5UA77</accession>
<protein>
    <recommendedName>
        <fullName evidence="1">RNA-binding protein Hfq</fullName>
    </recommendedName>
</protein>
<organism>
    <name type="scientific">Haemophilus influenzae (strain PittEE)</name>
    <dbReference type="NCBI Taxonomy" id="374930"/>
    <lineage>
        <taxon>Bacteria</taxon>
        <taxon>Pseudomonadati</taxon>
        <taxon>Pseudomonadota</taxon>
        <taxon>Gammaproteobacteria</taxon>
        <taxon>Pasteurellales</taxon>
        <taxon>Pasteurellaceae</taxon>
        <taxon>Haemophilus</taxon>
    </lineage>
</organism>